<accession>B7NMA8</accession>
<organism>
    <name type="scientific">Escherichia coli O7:K1 (strain IAI39 / ExPEC)</name>
    <dbReference type="NCBI Taxonomy" id="585057"/>
    <lineage>
        <taxon>Bacteria</taxon>
        <taxon>Pseudomonadati</taxon>
        <taxon>Pseudomonadota</taxon>
        <taxon>Gammaproteobacteria</taxon>
        <taxon>Enterobacterales</taxon>
        <taxon>Enterobacteriaceae</taxon>
        <taxon>Escherichia</taxon>
    </lineage>
</organism>
<reference key="1">
    <citation type="journal article" date="2009" name="PLoS Genet.">
        <title>Organised genome dynamics in the Escherichia coli species results in highly diverse adaptive paths.</title>
        <authorList>
            <person name="Touchon M."/>
            <person name="Hoede C."/>
            <person name="Tenaillon O."/>
            <person name="Barbe V."/>
            <person name="Baeriswyl S."/>
            <person name="Bidet P."/>
            <person name="Bingen E."/>
            <person name="Bonacorsi S."/>
            <person name="Bouchier C."/>
            <person name="Bouvet O."/>
            <person name="Calteau A."/>
            <person name="Chiapello H."/>
            <person name="Clermont O."/>
            <person name="Cruveiller S."/>
            <person name="Danchin A."/>
            <person name="Diard M."/>
            <person name="Dossat C."/>
            <person name="Karoui M.E."/>
            <person name="Frapy E."/>
            <person name="Garry L."/>
            <person name="Ghigo J.M."/>
            <person name="Gilles A.M."/>
            <person name="Johnson J."/>
            <person name="Le Bouguenec C."/>
            <person name="Lescat M."/>
            <person name="Mangenot S."/>
            <person name="Martinez-Jehanne V."/>
            <person name="Matic I."/>
            <person name="Nassif X."/>
            <person name="Oztas S."/>
            <person name="Petit M.A."/>
            <person name="Pichon C."/>
            <person name="Rouy Z."/>
            <person name="Ruf C.S."/>
            <person name="Schneider D."/>
            <person name="Tourret J."/>
            <person name="Vacherie B."/>
            <person name="Vallenet D."/>
            <person name="Medigue C."/>
            <person name="Rocha E.P.C."/>
            <person name="Denamur E."/>
        </authorList>
    </citation>
    <scope>NUCLEOTIDE SEQUENCE [LARGE SCALE GENOMIC DNA]</scope>
    <source>
        <strain>IAI39 / ExPEC</strain>
    </source>
</reference>
<comment type="function">
    <text evidence="1">This enzyme scavenges exogenous and endogenous cytidine and 2'-deoxycytidine for UMP synthesis.</text>
</comment>
<comment type="catalytic activity">
    <reaction evidence="1">
        <text>cytidine + H2O + H(+) = uridine + NH4(+)</text>
        <dbReference type="Rhea" id="RHEA:16069"/>
        <dbReference type="ChEBI" id="CHEBI:15377"/>
        <dbReference type="ChEBI" id="CHEBI:15378"/>
        <dbReference type="ChEBI" id="CHEBI:16704"/>
        <dbReference type="ChEBI" id="CHEBI:17562"/>
        <dbReference type="ChEBI" id="CHEBI:28938"/>
        <dbReference type="EC" id="3.5.4.5"/>
    </reaction>
</comment>
<comment type="catalytic activity">
    <reaction evidence="1">
        <text>2'-deoxycytidine + H2O + H(+) = 2'-deoxyuridine + NH4(+)</text>
        <dbReference type="Rhea" id="RHEA:13433"/>
        <dbReference type="ChEBI" id="CHEBI:15377"/>
        <dbReference type="ChEBI" id="CHEBI:15378"/>
        <dbReference type="ChEBI" id="CHEBI:15698"/>
        <dbReference type="ChEBI" id="CHEBI:16450"/>
        <dbReference type="ChEBI" id="CHEBI:28938"/>
        <dbReference type="EC" id="3.5.4.5"/>
    </reaction>
</comment>
<comment type="cofactor">
    <cofactor evidence="1">
        <name>Zn(2+)</name>
        <dbReference type="ChEBI" id="CHEBI:29105"/>
    </cofactor>
    <text evidence="1">Binds 1 zinc ion.</text>
</comment>
<comment type="subunit">
    <text evidence="1">Homodimer.</text>
</comment>
<comment type="similarity">
    <text evidence="1">Belongs to the cytidine and deoxycytidylate deaminase family.</text>
</comment>
<feature type="chain" id="PRO_1000147097" description="Cytidine deaminase">
    <location>
        <begin position="1"/>
        <end position="294"/>
    </location>
</feature>
<feature type="domain" description="CMP/dCMP-type deaminase 1" evidence="2">
    <location>
        <begin position="48"/>
        <end position="168"/>
    </location>
</feature>
<feature type="domain" description="CMP/dCMP-type deaminase 2" evidence="2">
    <location>
        <begin position="186"/>
        <end position="294"/>
    </location>
</feature>
<feature type="active site" description="Proton donor" evidence="1">
    <location>
        <position position="104"/>
    </location>
</feature>
<feature type="binding site" evidence="1">
    <location>
        <begin position="89"/>
        <end position="91"/>
    </location>
    <ligand>
        <name>substrate</name>
    </ligand>
</feature>
<feature type="binding site" evidence="1">
    <location>
        <position position="102"/>
    </location>
    <ligand>
        <name>Zn(2+)</name>
        <dbReference type="ChEBI" id="CHEBI:29105"/>
        <note>catalytic</note>
    </ligand>
</feature>
<feature type="binding site" evidence="1">
    <location>
        <position position="129"/>
    </location>
    <ligand>
        <name>Zn(2+)</name>
        <dbReference type="ChEBI" id="CHEBI:29105"/>
        <note>catalytic</note>
    </ligand>
</feature>
<feature type="binding site" evidence="1">
    <location>
        <position position="132"/>
    </location>
    <ligand>
        <name>Zn(2+)</name>
        <dbReference type="ChEBI" id="CHEBI:29105"/>
        <note>catalytic</note>
    </ligand>
</feature>
<dbReference type="EC" id="3.5.4.5" evidence="1"/>
<dbReference type="EMBL" id="CU928164">
    <property type="protein sequence ID" value="CAR18408.1"/>
    <property type="molecule type" value="Genomic_DNA"/>
</dbReference>
<dbReference type="RefSeq" id="WP_000553571.1">
    <property type="nucleotide sequence ID" value="NC_011750.1"/>
</dbReference>
<dbReference type="RefSeq" id="YP_002408244.1">
    <property type="nucleotide sequence ID" value="NC_011750.1"/>
</dbReference>
<dbReference type="SMR" id="B7NMA8"/>
<dbReference type="STRING" id="585057.ECIAI39_2282"/>
<dbReference type="KEGG" id="ect:ECIAI39_2282"/>
<dbReference type="PATRIC" id="fig|585057.6.peg.2375"/>
<dbReference type="HOGENOM" id="CLU_052424_0_0_6"/>
<dbReference type="Proteomes" id="UP000000749">
    <property type="component" value="Chromosome"/>
</dbReference>
<dbReference type="GO" id="GO:0005829">
    <property type="term" value="C:cytosol"/>
    <property type="evidence" value="ECO:0007669"/>
    <property type="project" value="TreeGrafter"/>
</dbReference>
<dbReference type="GO" id="GO:0004126">
    <property type="term" value="F:cytidine deaminase activity"/>
    <property type="evidence" value="ECO:0007669"/>
    <property type="project" value="UniProtKB-UniRule"/>
</dbReference>
<dbReference type="GO" id="GO:0042802">
    <property type="term" value="F:identical protein binding"/>
    <property type="evidence" value="ECO:0007669"/>
    <property type="project" value="UniProtKB-ARBA"/>
</dbReference>
<dbReference type="GO" id="GO:0008270">
    <property type="term" value="F:zinc ion binding"/>
    <property type="evidence" value="ECO:0007669"/>
    <property type="project" value="UniProtKB-UniRule"/>
</dbReference>
<dbReference type="GO" id="GO:0009972">
    <property type="term" value="P:cytidine deamination"/>
    <property type="evidence" value="ECO:0007669"/>
    <property type="project" value="InterPro"/>
</dbReference>
<dbReference type="CDD" id="cd01283">
    <property type="entry name" value="cytidine_deaminase"/>
    <property type="match status" value="2"/>
</dbReference>
<dbReference type="FunFam" id="3.40.140.10:FF:000006">
    <property type="entry name" value="Cytidine deaminase"/>
    <property type="match status" value="1"/>
</dbReference>
<dbReference type="FunFam" id="3.40.140.10:FF:000007">
    <property type="entry name" value="Cytidine deaminase"/>
    <property type="match status" value="1"/>
</dbReference>
<dbReference type="Gene3D" id="3.40.140.10">
    <property type="entry name" value="Cytidine Deaminase, domain 2"/>
    <property type="match status" value="2"/>
</dbReference>
<dbReference type="HAMAP" id="MF_01558">
    <property type="entry name" value="Cyt_deam"/>
    <property type="match status" value="1"/>
</dbReference>
<dbReference type="InterPro" id="IPR016192">
    <property type="entry name" value="APOBEC/CMP_deaminase_Zn-bd"/>
</dbReference>
<dbReference type="InterPro" id="IPR002125">
    <property type="entry name" value="CMP_dCMP_dom"/>
</dbReference>
<dbReference type="InterPro" id="IPR013171">
    <property type="entry name" value="Cyd/dCyd_deaminase_Zn-bd"/>
</dbReference>
<dbReference type="InterPro" id="IPR050202">
    <property type="entry name" value="Cyt/Deoxycyt_deaminase"/>
</dbReference>
<dbReference type="InterPro" id="IPR006263">
    <property type="entry name" value="Cyt_deam_dimer"/>
</dbReference>
<dbReference type="InterPro" id="IPR016193">
    <property type="entry name" value="Cytidine_deaminase-like"/>
</dbReference>
<dbReference type="InterPro" id="IPR020797">
    <property type="entry name" value="Cytidine_deaminase_bacteria"/>
</dbReference>
<dbReference type="NCBIfam" id="TIGR01355">
    <property type="entry name" value="cyt_deam_dimer"/>
    <property type="match status" value="1"/>
</dbReference>
<dbReference type="NCBIfam" id="NF006537">
    <property type="entry name" value="PRK09027.1"/>
    <property type="match status" value="1"/>
</dbReference>
<dbReference type="PANTHER" id="PTHR11644">
    <property type="entry name" value="CYTIDINE DEAMINASE"/>
    <property type="match status" value="1"/>
</dbReference>
<dbReference type="PANTHER" id="PTHR11644:SF2">
    <property type="entry name" value="CYTIDINE DEAMINASE"/>
    <property type="match status" value="1"/>
</dbReference>
<dbReference type="Pfam" id="PF00383">
    <property type="entry name" value="dCMP_cyt_deam_1"/>
    <property type="match status" value="1"/>
</dbReference>
<dbReference type="Pfam" id="PF08211">
    <property type="entry name" value="dCMP_cyt_deam_2"/>
    <property type="match status" value="1"/>
</dbReference>
<dbReference type="PIRSF" id="PIRSF006334">
    <property type="entry name" value="Cdd_plus_pseudo"/>
    <property type="match status" value="1"/>
</dbReference>
<dbReference type="SUPFAM" id="SSF53927">
    <property type="entry name" value="Cytidine deaminase-like"/>
    <property type="match status" value="2"/>
</dbReference>
<dbReference type="PROSITE" id="PS00903">
    <property type="entry name" value="CYT_DCMP_DEAMINASES_1"/>
    <property type="match status" value="1"/>
</dbReference>
<dbReference type="PROSITE" id="PS51747">
    <property type="entry name" value="CYT_DCMP_DEAMINASES_2"/>
    <property type="match status" value="2"/>
</dbReference>
<keyword id="KW-0378">Hydrolase</keyword>
<keyword id="KW-0479">Metal-binding</keyword>
<keyword id="KW-0862">Zinc</keyword>
<name>CDD_ECO7I</name>
<protein>
    <recommendedName>
        <fullName evidence="1">Cytidine deaminase</fullName>
        <ecNumber evidence="1">3.5.4.5</ecNumber>
    </recommendedName>
    <alternativeName>
        <fullName evidence="1">Cytidine aminohydrolase</fullName>
        <shortName evidence="1">CDA</shortName>
    </alternativeName>
</protein>
<sequence>MHPRFQTAFAQLADNLQSALEPILADKYFPALLTGEQVSSLKSATGLDEDALAFALLPLAAACARTPLSNFNVGAIARGVSGTWYFGANMEFIGATMQQTVHAEQSAISHAWLSGEKALEAITVNYTPCGHCRQFMNELNSGLDLRIHLPGREAHALRDYLPDAFGPKDLEIKTLLMDEQDHGYALTGDALSQAAIAAANRSHMPYSKSPSGVALECKDGRIFSGSYAENAAFNPTLPPLQGALILLNLKGYDYPDIQRAVLAEKADAPLIQWDATSATLKALGCHSIDRVLLA</sequence>
<evidence type="ECO:0000255" key="1">
    <source>
        <dbReference type="HAMAP-Rule" id="MF_01558"/>
    </source>
</evidence>
<evidence type="ECO:0000255" key="2">
    <source>
        <dbReference type="PROSITE-ProRule" id="PRU01083"/>
    </source>
</evidence>
<gene>
    <name evidence="1" type="primary">cdd</name>
    <name type="ordered locus">ECIAI39_2282</name>
</gene>
<proteinExistence type="inferred from homology"/>